<protein>
    <recommendedName>
        <fullName>Uncharacterized protein K145R</fullName>
        <shortName>pK145R</shortName>
    </recommendedName>
</protein>
<keyword id="KW-0426">Late protein</keyword>
<keyword id="KW-0946">Virion</keyword>
<dbReference type="EMBL" id="AY261361">
    <property type="status" value="NOT_ANNOTATED_CDS"/>
    <property type="molecule type" value="Genomic_DNA"/>
</dbReference>
<dbReference type="SMR" id="P0CA49"/>
<dbReference type="Proteomes" id="UP000000860">
    <property type="component" value="Segment"/>
</dbReference>
<dbReference type="GO" id="GO:0044423">
    <property type="term" value="C:virion component"/>
    <property type="evidence" value="ECO:0007669"/>
    <property type="project" value="UniProtKB-KW"/>
</dbReference>
<feature type="chain" id="PRO_0000373521" description="Uncharacterized protein K145R">
    <location>
        <begin position="1"/>
        <end position="145"/>
    </location>
</feature>
<sequence length="145" mass="17191">MDHYLKKLEDIYKKLEGHPFLFSPSKTNEKEFITLLNQALASTQLYRSIQQLFLTMYKLDPIGFINYIKTSKQEYLCLLINPKLVTKFLKITSFKIYINFRLKTFYISPNKYNNFYTAPSEEKANHLLKEEKTWAKIVEEGGEES</sequence>
<organismHost>
    <name type="scientific">Ornithodoros</name>
    <name type="common">relapsing fever ticks</name>
    <dbReference type="NCBI Taxonomy" id="6937"/>
</organismHost>
<organismHost>
    <name type="scientific">Phacochoerus aethiopicus</name>
    <name type="common">Warthog</name>
    <dbReference type="NCBI Taxonomy" id="85517"/>
</organismHost>
<organismHost>
    <name type="scientific">Phacochoerus africanus</name>
    <name type="common">Warthog</name>
    <dbReference type="NCBI Taxonomy" id="41426"/>
</organismHost>
<organismHost>
    <name type="scientific">Potamochoerus larvatus</name>
    <name type="common">Bushpig</name>
    <dbReference type="NCBI Taxonomy" id="273792"/>
</organismHost>
<organismHost>
    <name type="scientific">Sus scrofa</name>
    <name type="common">Pig</name>
    <dbReference type="NCBI Taxonomy" id="9823"/>
</organismHost>
<accession>P0CA49</accession>
<reference key="1">
    <citation type="submission" date="2003-03" db="EMBL/GenBank/DDBJ databases">
        <title>African swine fever virus genomes.</title>
        <authorList>
            <person name="Kutish G.F."/>
            <person name="Rock D.L."/>
        </authorList>
    </citation>
    <scope>NUCLEOTIDE SEQUENCE [LARGE SCALE GENOMIC DNA]</scope>
</reference>
<name>VF145_ASFM2</name>
<evidence type="ECO:0000250" key="1">
    <source>
        <dbReference type="UniProtKB" id="Q07385"/>
    </source>
</evidence>
<evidence type="ECO:0000305" key="2"/>
<gene>
    <name type="ordered locus">Mal-059</name>
</gene>
<comment type="subcellular location">
    <subcellularLocation>
        <location evidence="1">Virion</location>
    </subcellularLocation>
</comment>
<comment type="induction">
    <text evidence="2">Expressed in the late phase of the viral replicative cycle.</text>
</comment>
<comment type="similarity">
    <text evidence="2">Belongs to the asfivirus K145R family.</text>
</comment>
<organism>
    <name type="scientific">African swine fever virus (isolate Tick/Malawi/Lil 20-1/1983)</name>
    <name type="common">ASFV</name>
    <dbReference type="NCBI Taxonomy" id="10500"/>
    <lineage>
        <taxon>Viruses</taxon>
        <taxon>Varidnaviria</taxon>
        <taxon>Bamfordvirae</taxon>
        <taxon>Nucleocytoviricota</taxon>
        <taxon>Pokkesviricetes</taxon>
        <taxon>Asfuvirales</taxon>
        <taxon>Asfarviridae</taxon>
        <taxon>Asfivirus</taxon>
        <taxon>African swine fever virus</taxon>
    </lineage>
</organism>
<proteinExistence type="inferred from homology"/>